<organism>
    <name type="scientific">Xanthobacter autotrophicus (strain ATCC BAA-1158 / Py2)</name>
    <dbReference type="NCBI Taxonomy" id="78245"/>
    <lineage>
        <taxon>Bacteria</taxon>
        <taxon>Pseudomonadati</taxon>
        <taxon>Pseudomonadota</taxon>
        <taxon>Alphaproteobacteria</taxon>
        <taxon>Hyphomicrobiales</taxon>
        <taxon>Xanthobacteraceae</taxon>
        <taxon>Xanthobacter</taxon>
    </lineage>
</organism>
<comment type="function">
    <text evidence="1">Oxidative deamination of D-amino acids.</text>
</comment>
<comment type="catalytic activity">
    <reaction evidence="1">
        <text>a D-alpha-amino acid + A + H2O = a 2-oxocarboxylate + AH2 + NH4(+)</text>
        <dbReference type="Rhea" id="RHEA:18125"/>
        <dbReference type="ChEBI" id="CHEBI:13193"/>
        <dbReference type="ChEBI" id="CHEBI:15377"/>
        <dbReference type="ChEBI" id="CHEBI:17499"/>
        <dbReference type="ChEBI" id="CHEBI:28938"/>
        <dbReference type="ChEBI" id="CHEBI:35179"/>
        <dbReference type="ChEBI" id="CHEBI:59871"/>
    </reaction>
</comment>
<comment type="cofactor">
    <cofactor evidence="1">
        <name>FAD</name>
        <dbReference type="ChEBI" id="CHEBI:57692"/>
    </cofactor>
</comment>
<comment type="pathway">
    <text>Amino-acid degradation; D-alanine degradation; NH(3) and pyruvate from D-alanine: step 1/1.</text>
</comment>
<comment type="similarity">
    <text evidence="1">Belongs to the DadA oxidoreductase family.</text>
</comment>
<dbReference type="EC" id="1.4.99.-" evidence="1"/>
<dbReference type="EMBL" id="CP000781">
    <property type="protein sequence ID" value="ABS67547.1"/>
    <property type="molecule type" value="Genomic_DNA"/>
</dbReference>
<dbReference type="SMR" id="A7IHQ4"/>
<dbReference type="STRING" id="78245.Xaut_2304"/>
<dbReference type="KEGG" id="xau:Xaut_2304"/>
<dbReference type="eggNOG" id="COG0665">
    <property type="taxonomic scope" value="Bacteria"/>
</dbReference>
<dbReference type="HOGENOM" id="CLU_007884_9_2_5"/>
<dbReference type="OrthoDB" id="9805337at2"/>
<dbReference type="PhylomeDB" id="A7IHQ4"/>
<dbReference type="UniPathway" id="UPA00043">
    <property type="reaction ID" value="UER00498"/>
</dbReference>
<dbReference type="Proteomes" id="UP000002417">
    <property type="component" value="Chromosome"/>
</dbReference>
<dbReference type="GO" id="GO:0005737">
    <property type="term" value="C:cytoplasm"/>
    <property type="evidence" value="ECO:0007669"/>
    <property type="project" value="TreeGrafter"/>
</dbReference>
<dbReference type="GO" id="GO:0005886">
    <property type="term" value="C:plasma membrane"/>
    <property type="evidence" value="ECO:0007669"/>
    <property type="project" value="TreeGrafter"/>
</dbReference>
<dbReference type="GO" id="GO:0008718">
    <property type="term" value="F:D-amino-acid dehydrogenase activity"/>
    <property type="evidence" value="ECO:0007669"/>
    <property type="project" value="UniProtKB-UniRule"/>
</dbReference>
<dbReference type="GO" id="GO:0055130">
    <property type="term" value="P:D-alanine catabolic process"/>
    <property type="evidence" value="ECO:0007669"/>
    <property type="project" value="UniProtKB-UniPathway"/>
</dbReference>
<dbReference type="FunFam" id="3.50.50.60:FF:000020">
    <property type="entry name" value="D-amino acid dehydrogenase"/>
    <property type="match status" value="1"/>
</dbReference>
<dbReference type="Gene3D" id="3.30.9.10">
    <property type="entry name" value="D-Amino Acid Oxidase, subunit A, domain 2"/>
    <property type="match status" value="1"/>
</dbReference>
<dbReference type="Gene3D" id="3.50.50.60">
    <property type="entry name" value="FAD/NAD(P)-binding domain"/>
    <property type="match status" value="2"/>
</dbReference>
<dbReference type="HAMAP" id="MF_01202">
    <property type="entry name" value="DadA"/>
    <property type="match status" value="1"/>
</dbReference>
<dbReference type="InterPro" id="IPR023080">
    <property type="entry name" value="DadA"/>
</dbReference>
<dbReference type="InterPro" id="IPR006076">
    <property type="entry name" value="FAD-dep_OxRdtase"/>
</dbReference>
<dbReference type="InterPro" id="IPR036188">
    <property type="entry name" value="FAD/NAD-bd_sf"/>
</dbReference>
<dbReference type="NCBIfam" id="NF001933">
    <property type="entry name" value="PRK00711.1"/>
    <property type="match status" value="1"/>
</dbReference>
<dbReference type="PANTHER" id="PTHR13847:SF280">
    <property type="entry name" value="D-AMINO ACID DEHYDROGENASE"/>
    <property type="match status" value="1"/>
</dbReference>
<dbReference type="PANTHER" id="PTHR13847">
    <property type="entry name" value="SARCOSINE DEHYDROGENASE-RELATED"/>
    <property type="match status" value="1"/>
</dbReference>
<dbReference type="Pfam" id="PF01266">
    <property type="entry name" value="DAO"/>
    <property type="match status" value="1"/>
</dbReference>
<dbReference type="SUPFAM" id="SSF54373">
    <property type="entry name" value="FAD-linked reductases, C-terminal domain"/>
    <property type="match status" value="1"/>
</dbReference>
<dbReference type="SUPFAM" id="SSF51905">
    <property type="entry name" value="FAD/NAD(P)-binding domain"/>
    <property type="match status" value="1"/>
</dbReference>
<reference key="1">
    <citation type="submission" date="2007-07" db="EMBL/GenBank/DDBJ databases">
        <title>Complete sequence of chromosome of Xanthobacter autotrophicus Py2.</title>
        <authorList>
            <consortium name="US DOE Joint Genome Institute"/>
            <person name="Copeland A."/>
            <person name="Lucas S."/>
            <person name="Lapidus A."/>
            <person name="Barry K."/>
            <person name="Glavina del Rio T."/>
            <person name="Hammon N."/>
            <person name="Israni S."/>
            <person name="Dalin E."/>
            <person name="Tice H."/>
            <person name="Pitluck S."/>
            <person name="Sims D."/>
            <person name="Brettin T."/>
            <person name="Bruce D."/>
            <person name="Detter J.C."/>
            <person name="Han C."/>
            <person name="Tapia R."/>
            <person name="Brainard J."/>
            <person name="Schmutz J."/>
            <person name="Larimer F."/>
            <person name="Land M."/>
            <person name="Hauser L."/>
            <person name="Kyrpides N."/>
            <person name="Kim E."/>
            <person name="Ensigns S.A."/>
            <person name="Richardson P."/>
        </authorList>
    </citation>
    <scope>NUCLEOTIDE SEQUENCE [LARGE SCALE GENOMIC DNA]</scope>
    <source>
        <strain>ATCC BAA-1158 / Py2</strain>
    </source>
</reference>
<protein>
    <recommendedName>
        <fullName evidence="1">D-amino acid dehydrogenase</fullName>
        <ecNumber evidence="1">1.4.99.-</ecNumber>
    </recommendedName>
</protein>
<accession>A7IHQ4</accession>
<gene>
    <name evidence="1" type="primary">dadA</name>
    <name type="ordered locus">Xaut_2304</name>
</gene>
<keyword id="KW-0274">FAD</keyword>
<keyword id="KW-0285">Flavoprotein</keyword>
<keyword id="KW-0560">Oxidoreductase</keyword>
<keyword id="KW-1185">Reference proteome</keyword>
<name>DADA_XANP2</name>
<feature type="chain" id="PRO_1000138674" description="D-amino acid dehydrogenase">
    <location>
        <begin position="1"/>
        <end position="421"/>
    </location>
</feature>
<feature type="binding site" evidence="1">
    <location>
        <begin position="3"/>
        <end position="17"/>
    </location>
    <ligand>
        <name>FAD</name>
        <dbReference type="ChEBI" id="CHEBI:57692"/>
    </ligand>
</feature>
<proteinExistence type="inferred from homology"/>
<evidence type="ECO:0000255" key="1">
    <source>
        <dbReference type="HAMAP-Rule" id="MF_01202"/>
    </source>
</evidence>
<sequence>MRILILGSGVVGTASAYYLAKAGHEVTVLDRQRAAGMETSFANAGQVSPGYSAPWAGPGIPVKAIKWLLMHHRPLVVWPSLDPKLYLWLAKMLANCTEEAYRRNKARMVALAEYSRDALDALRSETGIAYDERMLGTLQLFRTRKQLDHVHSDTEVLDAHNVRYELLDPSGCIRAEPALARVRDKFVGGLRLPGDETGDAHIFTRNLADICARQGVTFRYGVTVEGLRHEAGRITGVALAGGEIATADIYVAAMGSYTPALLAPLGIRLPVYPVKGYSLTLPITDPDAAPRSTVMDETYKVAITRLGERIRVGGTAELAGFDLSLREPRRATLAHSVGDLFPAGGDISKATFWTGLRPMTPDGTPIIGPTKLDNLFTNTGHGTLGWTMACGSGRVLADLIGGRAPDIDTADLSVARYAEAA</sequence>